<protein>
    <recommendedName>
        <fullName evidence="1">Photosystem II reaction center protein L</fullName>
        <shortName evidence="1">PSII-L</shortName>
    </recommendedName>
</protein>
<dbReference type="EMBL" id="AY228468">
    <property type="protein sequence ID" value="AAO74034.1"/>
    <property type="molecule type" value="Genomic_DNA"/>
</dbReference>
<dbReference type="RefSeq" id="NP_817186.1">
    <property type="nucleotide sequence ID" value="NC_004677.2"/>
</dbReference>
<dbReference type="SMR" id="Q85X31"/>
<dbReference type="GeneID" id="806913"/>
<dbReference type="GO" id="GO:0009535">
    <property type="term" value="C:chloroplast thylakoid membrane"/>
    <property type="evidence" value="ECO:0007669"/>
    <property type="project" value="UniProtKB-SubCell"/>
</dbReference>
<dbReference type="GO" id="GO:0009539">
    <property type="term" value="C:photosystem II reaction center"/>
    <property type="evidence" value="ECO:0007669"/>
    <property type="project" value="InterPro"/>
</dbReference>
<dbReference type="GO" id="GO:0015979">
    <property type="term" value="P:photosynthesis"/>
    <property type="evidence" value="ECO:0007669"/>
    <property type="project" value="UniProtKB-UniRule"/>
</dbReference>
<dbReference type="HAMAP" id="MF_01317">
    <property type="entry name" value="PSII_PsbL"/>
    <property type="match status" value="1"/>
</dbReference>
<dbReference type="InterPro" id="IPR003372">
    <property type="entry name" value="PSII_PsbL"/>
</dbReference>
<dbReference type="InterPro" id="IPR037266">
    <property type="entry name" value="PSII_PsbL_sf"/>
</dbReference>
<dbReference type="Pfam" id="PF02419">
    <property type="entry name" value="PsbL"/>
    <property type="match status" value="1"/>
</dbReference>
<dbReference type="SUPFAM" id="SSF161017">
    <property type="entry name" value="Photosystem II reaction center protein L, PsbL"/>
    <property type="match status" value="1"/>
</dbReference>
<organism>
    <name type="scientific">Pinus koraiensis</name>
    <name type="common">Korean pine</name>
    <dbReference type="NCBI Taxonomy" id="88728"/>
    <lineage>
        <taxon>Eukaryota</taxon>
        <taxon>Viridiplantae</taxon>
        <taxon>Streptophyta</taxon>
        <taxon>Embryophyta</taxon>
        <taxon>Tracheophyta</taxon>
        <taxon>Spermatophyta</taxon>
        <taxon>Pinopsida</taxon>
        <taxon>Pinidae</taxon>
        <taxon>Conifers I</taxon>
        <taxon>Pinales</taxon>
        <taxon>Pinaceae</taxon>
        <taxon>Pinus</taxon>
        <taxon>Pinus subgen. Strobus</taxon>
    </lineage>
</organism>
<feature type="chain" id="PRO_0000219759" description="Photosystem II reaction center protein L">
    <location>
        <begin position="1"/>
        <end position="41"/>
    </location>
</feature>
<feature type="transmembrane region" description="Helical" evidence="1">
    <location>
        <begin position="20"/>
        <end position="40"/>
    </location>
</feature>
<evidence type="ECO:0000255" key="1">
    <source>
        <dbReference type="HAMAP-Rule" id="MF_01317"/>
    </source>
</evidence>
<name>PSBL_PINKO</name>
<sequence length="41" mass="4785">MKPPNPTNPNDQNVELNRTSLYWGLLLIFVLAVPFSNYFFN</sequence>
<geneLocation type="chloroplast"/>
<gene>
    <name evidence="1" type="primary">psbL</name>
</gene>
<proteinExistence type="inferred from homology"/>
<reference key="1">
    <citation type="submission" date="2003-02" db="EMBL/GenBank/DDBJ databases">
        <title>Complete nucleotide sequence of Pinus koraiensis.</title>
        <authorList>
            <person name="Noh E.W."/>
            <person name="Lee J.S."/>
            <person name="Choi Y.I."/>
            <person name="Han M.S."/>
            <person name="Yi Y.S."/>
            <person name="Han S.U."/>
        </authorList>
    </citation>
    <scope>NUCLEOTIDE SEQUENCE [LARGE SCALE GENOMIC DNA]</scope>
    <source>
        <strain>KangWon16</strain>
    </source>
</reference>
<accession>Q85X31</accession>
<comment type="function">
    <text evidence="1">One of the components of the core complex of photosystem II (PSII). PSII is a light-driven water:plastoquinone oxidoreductase that uses light energy to abstract electrons from H(2)O, generating O(2) and a proton gradient subsequently used for ATP formation. It consists of a core antenna complex that captures photons, and an electron transfer chain that converts photonic excitation into a charge separation. This subunit is found at the monomer-monomer interface and is required for correct PSII assembly and/or dimerization.</text>
</comment>
<comment type="subunit">
    <text evidence="1">PSII is composed of 1 copy each of membrane proteins PsbA, PsbB, PsbC, PsbD, PsbE, PsbF, PsbH, PsbI, PsbJ, PsbK, PsbL, PsbM, PsbT, PsbX, PsbY, PsbZ, Psb30/Ycf12, at least 3 peripheral proteins of the oxygen-evolving complex and a large number of cofactors. It forms dimeric complexes.</text>
</comment>
<comment type="subcellular location">
    <subcellularLocation>
        <location evidence="1">Plastid</location>
        <location evidence="1">Chloroplast thylakoid membrane</location>
        <topology evidence="1">Single-pass membrane protein</topology>
    </subcellularLocation>
</comment>
<comment type="similarity">
    <text evidence="1">Belongs to the PsbL family.</text>
</comment>
<keyword id="KW-0150">Chloroplast</keyword>
<keyword id="KW-0472">Membrane</keyword>
<keyword id="KW-0602">Photosynthesis</keyword>
<keyword id="KW-0604">Photosystem II</keyword>
<keyword id="KW-0934">Plastid</keyword>
<keyword id="KW-0674">Reaction center</keyword>
<keyword id="KW-0793">Thylakoid</keyword>
<keyword id="KW-0812">Transmembrane</keyword>
<keyword id="KW-1133">Transmembrane helix</keyword>